<feature type="chain" id="PRO_0000414548" description="Release factor glutamine methyltransferase">
    <location>
        <begin position="1"/>
        <end position="282"/>
    </location>
</feature>
<feature type="binding site">
    <location>
        <begin position="129"/>
        <end position="133"/>
    </location>
    <ligand>
        <name>S-adenosyl-L-methionine</name>
        <dbReference type="ChEBI" id="CHEBI:59789"/>
    </ligand>
</feature>
<feature type="binding site" evidence="1 2">
    <location>
        <position position="151"/>
    </location>
    <ligand>
        <name>S-adenosyl-L-methionine</name>
        <dbReference type="ChEBI" id="CHEBI:59789"/>
    </ligand>
</feature>
<feature type="binding site" evidence="1 2">
    <location>
        <position position="180"/>
    </location>
    <ligand>
        <name>S-adenosyl-L-methionine</name>
        <dbReference type="ChEBI" id="CHEBI:59789"/>
    </ligand>
</feature>
<feature type="binding site">
    <location>
        <begin position="197"/>
        <end position="200"/>
    </location>
    <ligand>
        <name>substrate</name>
    </ligand>
</feature>
<feature type="binding site" evidence="1 2">
    <location>
        <position position="197"/>
    </location>
    <ligand>
        <name>S-adenosyl-L-methionine</name>
        <dbReference type="ChEBI" id="CHEBI:59789"/>
    </ligand>
</feature>
<feature type="helix" evidence="5">
    <location>
        <begin position="14"/>
        <end position="24"/>
    </location>
</feature>
<feature type="turn" evidence="5">
    <location>
        <begin position="25"/>
        <end position="28"/>
    </location>
</feature>
<feature type="helix" evidence="5">
    <location>
        <begin position="32"/>
        <end position="44"/>
    </location>
</feature>
<feature type="helix" evidence="5">
    <location>
        <begin position="48"/>
        <end position="51"/>
    </location>
</feature>
<feature type="strand" evidence="6">
    <location>
        <begin position="53"/>
        <end position="55"/>
    </location>
</feature>
<feature type="helix" evidence="5">
    <location>
        <begin position="60"/>
        <end position="74"/>
    </location>
</feature>
<feature type="helix" evidence="5">
    <location>
        <begin position="79"/>
        <end position="83"/>
    </location>
</feature>
<feature type="strand" evidence="5">
    <location>
        <begin position="85"/>
        <end position="88"/>
    </location>
</feature>
<feature type="strand" evidence="5">
    <location>
        <begin position="91"/>
        <end position="94"/>
    </location>
</feature>
<feature type="helix" evidence="5">
    <location>
        <begin position="106"/>
        <end position="120"/>
    </location>
</feature>
<feature type="strand" evidence="5">
    <location>
        <begin position="124"/>
        <end position="129"/>
    </location>
</feature>
<feature type="helix" evidence="5">
    <location>
        <begin position="134"/>
        <end position="142"/>
    </location>
</feature>
<feature type="strand" evidence="5">
    <location>
        <begin position="146"/>
        <end position="152"/>
    </location>
</feature>
<feature type="helix" evidence="5">
    <location>
        <begin position="154"/>
        <end position="166"/>
    </location>
</feature>
<feature type="strand" evidence="5">
    <location>
        <begin position="172"/>
        <end position="179"/>
    </location>
</feature>
<feature type="helix" evidence="5">
    <location>
        <begin position="182"/>
        <end position="187"/>
    </location>
</feature>
<feature type="turn" evidence="5">
    <location>
        <begin position="188"/>
        <end position="190"/>
    </location>
</feature>
<feature type="strand" evidence="5">
    <location>
        <begin position="193"/>
        <end position="196"/>
    </location>
</feature>
<feature type="helix" evidence="5">
    <location>
        <begin position="203"/>
        <end position="205"/>
    </location>
</feature>
<feature type="helix" evidence="7">
    <location>
        <begin position="211"/>
        <end position="213"/>
    </location>
</feature>
<feature type="helix" evidence="5">
    <location>
        <begin position="216"/>
        <end position="219"/>
    </location>
</feature>
<feature type="turn" evidence="5">
    <location>
        <begin position="222"/>
        <end position="224"/>
    </location>
</feature>
<feature type="helix" evidence="5">
    <location>
        <begin position="227"/>
        <end position="235"/>
    </location>
</feature>
<feature type="strand" evidence="5">
    <location>
        <begin position="242"/>
        <end position="246"/>
    </location>
</feature>
<feature type="helix" evidence="8">
    <location>
        <begin position="249"/>
        <end position="251"/>
    </location>
</feature>
<feature type="helix" evidence="5">
    <location>
        <begin position="252"/>
        <end position="255"/>
    </location>
</feature>
<feature type="turn" evidence="5">
    <location>
        <begin position="256"/>
        <end position="258"/>
    </location>
</feature>
<feature type="strand" evidence="7">
    <location>
        <begin position="259"/>
        <end position="261"/>
    </location>
</feature>
<feature type="strand" evidence="5">
    <location>
        <begin position="263"/>
        <end position="266"/>
    </location>
</feature>
<feature type="strand" evidence="5">
    <location>
        <begin position="270"/>
        <end position="278"/>
    </location>
</feature>
<comment type="function">
    <text evidence="3">Methylates the class 1 translation termination release factors RF1/PrfA and RF2/PrfB on the glutamine residue of the universally conserved GGQ motif.</text>
</comment>
<comment type="catalytic activity">
    <reaction>
        <text>L-glutaminyl-[peptide chain release factor] + S-adenosyl-L-methionine = N(5)-methyl-L-glutaminyl-[peptide chain release factor] + S-adenosyl-L-homocysteine + H(+)</text>
        <dbReference type="Rhea" id="RHEA:42896"/>
        <dbReference type="Rhea" id="RHEA-COMP:10271"/>
        <dbReference type="Rhea" id="RHEA-COMP:10272"/>
        <dbReference type="ChEBI" id="CHEBI:15378"/>
        <dbReference type="ChEBI" id="CHEBI:30011"/>
        <dbReference type="ChEBI" id="CHEBI:57856"/>
        <dbReference type="ChEBI" id="CHEBI:59789"/>
        <dbReference type="ChEBI" id="CHEBI:61891"/>
        <dbReference type="EC" id="2.1.1.297"/>
    </reaction>
</comment>
<comment type="subunit">
    <text evidence="1 2">Monomer and homodimer.</text>
</comment>
<comment type="miscellaneous">
    <text evidence="4">The crystal structure corresponding to PDB 1SG9 shows a glutamate anhydride cross-link formed between the Glu-97 side chains from two molecules, but this has not been observed in other PrmC structures from T.maritima. This cross-link is suggested being an artifact of concentration during crystallization (PubMed:18247349).</text>
</comment>
<comment type="similarity">
    <text evidence="3">Belongs to the protein N5-glutamine methyltransferase family. PrmC subfamily.</text>
</comment>
<organism>
    <name type="scientific">Thermotoga maritima (strain ATCC 43589 / DSM 3109 / JCM 10099 / NBRC 100826 / MSB8)</name>
    <dbReference type="NCBI Taxonomy" id="243274"/>
    <lineage>
        <taxon>Bacteria</taxon>
        <taxon>Thermotogati</taxon>
        <taxon>Thermotogota</taxon>
        <taxon>Thermotogae</taxon>
        <taxon>Thermotogales</taxon>
        <taxon>Thermotogaceae</taxon>
        <taxon>Thermotoga</taxon>
    </lineage>
</organism>
<keyword id="KW-0002">3D-structure</keyword>
<keyword id="KW-0489">Methyltransferase</keyword>
<keyword id="KW-1185">Reference proteome</keyword>
<keyword id="KW-0949">S-adenosyl-L-methionine</keyword>
<keyword id="KW-0808">Transferase</keyword>
<accession>Q9WYV8</accession>
<name>PRMC_THEMA</name>
<reference key="1">
    <citation type="journal article" date="1999" name="Nature">
        <title>Evidence for lateral gene transfer between Archaea and Bacteria from genome sequence of Thermotoga maritima.</title>
        <authorList>
            <person name="Nelson K.E."/>
            <person name="Clayton R.A."/>
            <person name="Gill S.R."/>
            <person name="Gwinn M.L."/>
            <person name="Dodson R.J."/>
            <person name="Haft D.H."/>
            <person name="Hickey E.K."/>
            <person name="Peterson J.D."/>
            <person name="Nelson W.C."/>
            <person name="Ketchum K.A."/>
            <person name="McDonald L.A."/>
            <person name="Utterback T.R."/>
            <person name="Malek J.A."/>
            <person name="Linher K.D."/>
            <person name="Garrett M.M."/>
            <person name="Stewart A.M."/>
            <person name="Cotton M.D."/>
            <person name="Pratt M.S."/>
            <person name="Phillips C.A."/>
            <person name="Richardson D.L."/>
            <person name="Heidelberg J.F."/>
            <person name="Sutton G.G."/>
            <person name="Fleischmann R.D."/>
            <person name="Eisen J.A."/>
            <person name="White O."/>
            <person name="Salzberg S.L."/>
            <person name="Smith H.O."/>
            <person name="Venter J.C."/>
            <person name="Fraser C.M."/>
        </authorList>
    </citation>
    <scope>NUCLEOTIDE SEQUENCE [LARGE SCALE GENOMIC DNA]</scope>
    <source>
        <strain>ATCC 43589 / DSM 3109 / JCM 10099 / NBRC 100826 / MSB8</strain>
    </source>
</reference>
<reference key="2">
    <citation type="journal article" date="2003" name="Mol. Cells">
        <title>X-ray crystallographic studies of HemK from Thermotoga maritima, an N5-glutamine methyltransferase.</title>
        <authorList>
            <person name="Yoon H.J."/>
            <person name="Kang K.Y."/>
            <person name="Ahn H.J."/>
            <person name="Shim S.M."/>
            <person name="Ha J.Y."/>
            <person name="Lee S.K."/>
            <person name="Mikami B."/>
            <person name="Suh S.W."/>
        </authorList>
    </citation>
    <scope>CRYSTALLIZATION</scope>
    <source>
        <strain>ATCC 43589 / DSM 3109 / JCM 10099 / NBRC 100826 / MSB8</strain>
    </source>
</reference>
<reference key="3">
    <citation type="journal article" date="2003" name="Biochemistry">
        <title>Structures along the catalytic pathway of PrmC/HemK, an N5-glutamine AdoMet-dependent methyltransferase.</title>
        <authorList>
            <person name="Schubert H.L."/>
            <person name="Phillips J.D."/>
            <person name="Hill C.P."/>
        </authorList>
    </citation>
    <scope>X-RAY CRYSTALLOGRAPHY (2.20 ANGSTROMS) IN COMPLEXES WITH S-ADENOSYL-L-HOMOCYSTEINE; S-ADENOSYL-L-METHIONINE AND GLUTAMINE</scope>
</reference>
<reference key="4">
    <citation type="journal article" date="2008" name="Proteins">
        <title>A novel mode of dimerization via formation of a glutamate anhydride crosslink in a protein crystal structure.</title>
        <authorList>
            <person name="Agarwal R."/>
            <person name="Burley S.K."/>
            <person name="Swaminathan S."/>
        </authorList>
    </citation>
    <scope>X-RAY CRYSTALLOGRAPHY (2.30 ANGSTROMS) IN COMPLEX WITH S-ADENOSYL-L-METHIONINE AND GLUTAMINE</scope>
    <scope>SUBUNIT</scope>
    <scope>GLUTAMATE ANHYDRIDE CROSS-LINK</scope>
</reference>
<reference key="5">
    <citation type="submission" date="2011-07" db="PDB data bank">
        <title>Crystal structure of N5-glutamine methyltransferase, HemK(EC 2.1.1.-) (TM0488) from Thermotoga maritima at 2.80 A resolution.</title>
        <authorList>
            <consortium name="Joint Center for Structural Genomics (JCSG)"/>
        </authorList>
    </citation>
    <scope>X-RAY CRYSTALLOGRAPHY (2.80 ANGSTROMS) IN COMPLEX WITH S-ADENOSYL-L-METHIONINE</scope>
</reference>
<evidence type="ECO:0000269" key="1">
    <source>
    </source>
</evidence>
<evidence type="ECO:0000269" key="2">
    <source ref="5"/>
</evidence>
<evidence type="ECO:0000305" key="3"/>
<evidence type="ECO:0000305" key="4">
    <source>
    </source>
</evidence>
<evidence type="ECO:0007829" key="5">
    <source>
        <dbReference type="PDB" id="1NV8"/>
    </source>
</evidence>
<evidence type="ECO:0007829" key="6">
    <source>
        <dbReference type="PDB" id="1NV9"/>
    </source>
</evidence>
<evidence type="ECO:0007829" key="7">
    <source>
        <dbReference type="PDB" id="1SG9"/>
    </source>
</evidence>
<evidence type="ECO:0007829" key="8">
    <source>
        <dbReference type="PDB" id="1VQ1"/>
    </source>
</evidence>
<protein>
    <recommendedName>
        <fullName>Release factor glutamine methyltransferase</fullName>
        <shortName>RF MTase</shortName>
        <ecNumber>2.1.1.297</ecNumber>
    </recommendedName>
    <alternativeName>
        <fullName>N5-glutamine methyltransferase PrmC</fullName>
    </alternativeName>
    <alternativeName>
        <fullName>Protein-(glutamine-N5) MTase PrmC</fullName>
    </alternativeName>
    <alternativeName>
        <fullName>Protein-glutamine N-methyltransferase PrmC</fullName>
    </alternativeName>
</protein>
<sequence length="282" mass="31609">MDTRKNVSGAERKIWSLIRDCSGKLEGVTETSVLEVLLIVSRVLGIRKEDLFLKDLGVSPTEEKRILELVEKRASGYPLHYILGEKEFMGLSFLVEEGVFVPRPETEELVELALELIRKYGIKTVADIGTGSGAIGVSVAKFSDAIVFATDVSSKAVEIARKNAERHGVSDRFFVRKGEFLEPFKEKFASIEMILSNPPYVKSSAHLPKDVLFEPPEALFGGEDGLDFYREFFGRYDTSGKIVLMEIGEDQVEELKKIVSDTVFLKDSAGKYRFLLLNRRSS</sequence>
<gene>
    <name type="primary">prmC</name>
    <name type="ordered locus">TM_0488</name>
</gene>
<dbReference type="EC" id="2.1.1.297"/>
<dbReference type="EMBL" id="AE000512">
    <property type="protein sequence ID" value="AAD35573.1"/>
    <property type="molecule type" value="Genomic_DNA"/>
</dbReference>
<dbReference type="PIR" id="G72369">
    <property type="entry name" value="G72369"/>
</dbReference>
<dbReference type="RefSeq" id="NP_228298.1">
    <property type="nucleotide sequence ID" value="NC_000853.1"/>
</dbReference>
<dbReference type="RefSeq" id="WP_004081478.1">
    <property type="nucleotide sequence ID" value="NC_000853.1"/>
</dbReference>
<dbReference type="PDB" id="1NV8">
    <property type="method" value="X-ray"/>
    <property type="resolution" value="2.20 A"/>
    <property type="chains" value="A/B=1-282"/>
</dbReference>
<dbReference type="PDB" id="1NV9">
    <property type="method" value="X-ray"/>
    <property type="resolution" value="2.36 A"/>
    <property type="chains" value="A=1-282"/>
</dbReference>
<dbReference type="PDB" id="1SG9">
    <property type="method" value="X-ray"/>
    <property type="resolution" value="2.30 A"/>
    <property type="chains" value="A/B/C=1-282"/>
</dbReference>
<dbReference type="PDB" id="1VQ1">
    <property type="method" value="X-ray"/>
    <property type="resolution" value="2.80 A"/>
    <property type="chains" value="A/B=1-282"/>
</dbReference>
<dbReference type="PDBsum" id="1NV8"/>
<dbReference type="PDBsum" id="1NV9"/>
<dbReference type="PDBsum" id="1SG9"/>
<dbReference type="PDBsum" id="1VQ1"/>
<dbReference type="SMR" id="Q9WYV8"/>
<dbReference type="FunCoup" id="Q9WYV8">
    <property type="interactions" value="397"/>
</dbReference>
<dbReference type="STRING" id="243274.TM_0488"/>
<dbReference type="DrugBank" id="DB03473">
    <property type="generic name" value="N5-Methylglutamine"/>
</dbReference>
<dbReference type="DrugBank" id="DB01752">
    <property type="generic name" value="S-adenosyl-L-homocysteine"/>
</dbReference>
<dbReference type="PaxDb" id="243274-THEMA_02230"/>
<dbReference type="DNASU" id="897528"/>
<dbReference type="EnsemblBacteria" id="AAD35573">
    <property type="protein sequence ID" value="AAD35573"/>
    <property type="gene ID" value="TM_0488"/>
</dbReference>
<dbReference type="KEGG" id="tma:TM0488"/>
<dbReference type="KEGG" id="tmi:THEMA_02230"/>
<dbReference type="KEGG" id="tmw:THMA_0501"/>
<dbReference type="PATRIC" id="fig|243274.18.peg.442"/>
<dbReference type="eggNOG" id="COG2890">
    <property type="taxonomic scope" value="Bacteria"/>
</dbReference>
<dbReference type="InParanoid" id="Q9WYV8"/>
<dbReference type="OrthoDB" id="9800643at2"/>
<dbReference type="BRENDA" id="2.1.1.297">
    <property type="organism ID" value="6331"/>
</dbReference>
<dbReference type="EvolutionaryTrace" id="Q9WYV8"/>
<dbReference type="Proteomes" id="UP000008183">
    <property type="component" value="Chromosome"/>
</dbReference>
<dbReference type="GO" id="GO:0003676">
    <property type="term" value="F:nucleic acid binding"/>
    <property type="evidence" value="ECO:0007669"/>
    <property type="project" value="InterPro"/>
</dbReference>
<dbReference type="GO" id="GO:0102559">
    <property type="term" value="F:protein-(glutamine-N5) methyltransferase activity"/>
    <property type="evidence" value="ECO:0007669"/>
    <property type="project" value="UniProtKB-EC"/>
</dbReference>
<dbReference type="GO" id="GO:0036009">
    <property type="term" value="F:protein-glutamine N-methyltransferase activity"/>
    <property type="evidence" value="ECO:0000318"/>
    <property type="project" value="GO_Central"/>
</dbReference>
<dbReference type="GO" id="GO:0032259">
    <property type="term" value="P:methylation"/>
    <property type="evidence" value="ECO:0007669"/>
    <property type="project" value="UniProtKB-KW"/>
</dbReference>
<dbReference type="GO" id="GO:0006415">
    <property type="term" value="P:translational termination"/>
    <property type="evidence" value="ECO:0000318"/>
    <property type="project" value="GO_Central"/>
</dbReference>
<dbReference type="CDD" id="cd02440">
    <property type="entry name" value="AdoMet_MTases"/>
    <property type="match status" value="1"/>
</dbReference>
<dbReference type="Gene3D" id="1.10.8.10">
    <property type="entry name" value="DNA helicase RuvA subunit, C-terminal domain"/>
    <property type="match status" value="1"/>
</dbReference>
<dbReference type="Gene3D" id="3.40.50.150">
    <property type="entry name" value="Vaccinia Virus protein VP39"/>
    <property type="match status" value="1"/>
</dbReference>
<dbReference type="HAMAP" id="MF_02126">
    <property type="entry name" value="RF_methyltr_PrmC"/>
    <property type="match status" value="1"/>
</dbReference>
<dbReference type="InterPro" id="IPR002052">
    <property type="entry name" value="DNA_methylase_N6_adenine_CS"/>
</dbReference>
<dbReference type="InterPro" id="IPR004556">
    <property type="entry name" value="HemK-like"/>
</dbReference>
<dbReference type="InterPro" id="IPR050320">
    <property type="entry name" value="N5-glutamine_MTase"/>
</dbReference>
<dbReference type="InterPro" id="IPR040758">
    <property type="entry name" value="PrmC_N"/>
</dbReference>
<dbReference type="InterPro" id="IPR019874">
    <property type="entry name" value="RF_methyltr_PrmC"/>
</dbReference>
<dbReference type="InterPro" id="IPR029063">
    <property type="entry name" value="SAM-dependent_MTases_sf"/>
</dbReference>
<dbReference type="InterPro" id="IPR007848">
    <property type="entry name" value="Small_mtfrase_dom"/>
</dbReference>
<dbReference type="NCBIfam" id="TIGR00536">
    <property type="entry name" value="hemK_fam"/>
    <property type="match status" value="1"/>
</dbReference>
<dbReference type="NCBIfam" id="TIGR03534">
    <property type="entry name" value="RF_mod_PrmC"/>
    <property type="match status" value="1"/>
</dbReference>
<dbReference type="PANTHER" id="PTHR18895">
    <property type="entry name" value="HEMK METHYLTRANSFERASE"/>
    <property type="match status" value="1"/>
</dbReference>
<dbReference type="PANTHER" id="PTHR18895:SF74">
    <property type="entry name" value="MTRF1L RELEASE FACTOR GLUTAMINE METHYLTRANSFERASE"/>
    <property type="match status" value="1"/>
</dbReference>
<dbReference type="Pfam" id="PF05175">
    <property type="entry name" value="MTS"/>
    <property type="match status" value="1"/>
</dbReference>
<dbReference type="Pfam" id="PF17827">
    <property type="entry name" value="PrmC_N"/>
    <property type="match status" value="1"/>
</dbReference>
<dbReference type="SUPFAM" id="SSF53335">
    <property type="entry name" value="S-adenosyl-L-methionine-dependent methyltransferases"/>
    <property type="match status" value="1"/>
</dbReference>
<proteinExistence type="evidence at protein level"/>